<evidence type="ECO:0000250" key="1"/>
<evidence type="ECO:0000250" key="2">
    <source>
        <dbReference type="UniProtKB" id="P19938"/>
    </source>
</evidence>
<evidence type="ECO:0000305" key="3"/>
<sequence length="289" mass="32300">MKVLVNNHLVEREDATVDIEDRGYQFGDGVYEVVRLYNGKFFTYNEHIDRLYASAAKIDLVIPYSKEELRALLEKLVAENNINTGNVYLQVTRGVQNPRNHVMPDDFPLEGVLTAAAREVPRNEQQFVQGGPVITEEDVRWLRCDIKSLNLLGNILAKNKAHQQNALEAVLHRGEQVTECSASNISIIKDGVLWTHAADNLILNGITRQVIIAVAKKNGIPVKEADFTLTDLREADEVFISSTTIEITPVTHIDGVQVADGKRGPITAKLHQYFVEEIVQACGELEFAK</sequence>
<comment type="function">
    <text evidence="1">Acts on the D-isomers of alanine, leucine, aspartate, glutamate, aminobutyrate, norvaline and asparagine. The enzyme transfers an amino group from a substrate D-amino acid to the pyridoxal phosphate cofactor to form pyridoxamine and an alpha-keto acid in the first half-reaction. The second half-reaction is the reverse of the first, transferring the amino group from the pyridoxamine to a second alpha-keto acid to form the product D-amino acid via a ping-pong mechanism. This is an important process in the formation of D-alanine and D-glutamate, which are essential bacterial cell wall components (By similarity).</text>
</comment>
<comment type="catalytic activity">
    <reaction>
        <text>D-alanine + 2-oxoglutarate = D-glutamate + pyruvate</text>
        <dbReference type="Rhea" id="RHEA:15869"/>
        <dbReference type="ChEBI" id="CHEBI:15361"/>
        <dbReference type="ChEBI" id="CHEBI:16810"/>
        <dbReference type="ChEBI" id="CHEBI:29986"/>
        <dbReference type="ChEBI" id="CHEBI:57416"/>
        <dbReference type="EC" id="2.6.1.21"/>
    </reaction>
</comment>
<comment type="cofactor">
    <cofactor evidence="1">
        <name>pyridoxal 5'-phosphate</name>
        <dbReference type="ChEBI" id="CHEBI:597326"/>
    </cofactor>
</comment>
<comment type="subunit">
    <text evidence="1">Homodimer.</text>
</comment>
<comment type="similarity">
    <text evidence="3">Belongs to the class-IV pyridoxal-phosphate-dependent aminotransferase family.</text>
</comment>
<name>DAAA_LISMF</name>
<feature type="chain" id="PRO_0000103251" description="D-alanine aminotransferase">
    <location>
        <begin position="1"/>
        <end position="289"/>
    </location>
</feature>
<feature type="active site" description="Proton acceptor" evidence="2">
    <location>
        <position position="147"/>
    </location>
</feature>
<feature type="binding site" evidence="2">
    <location>
        <position position="31"/>
    </location>
    <ligand>
        <name>substrate</name>
    </ligand>
</feature>
<feature type="binding site" evidence="2">
    <location>
        <position position="50"/>
    </location>
    <ligand>
        <name>pyridoxal 5'-phosphate</name>
        <dbReference type="ChEBI" id="CHEBI:597326"/>
    </ligand>
</feature>
<feature type="binding site" evidence="2">
    <location>
        <position position="99"/>
    </location>
    <ligand>
        <name>substrate</name>
    </ligand>
</feature>
<feature type="binding site" evidence="2">
    <location>
        <position position="101"/>
    </location>
    <ligand>
        <name>substrate</name>
    </ligand>
</feature>
<feature type="binding site" evidence="2">
    <location>
        <position position="179"/>
    </location>
    <ligand>
        <name>pyridoxal 5'-phosphate</name>
        <dbReference type="ChEBI" id="CHEBI:597326"/>
    </ligand>
</feature>
<feature type="modified residue" description="N6-(pyridoxal phosphate)lysine" evidence="2">
    <location>
        <position position="147"/>
    </location>
</feature>
<proteinExistence type="inferred from homology"/>
<gene>
    <name type="primary">dat</name>
    <name type="ordered locus">LMOf2365_1641</name>
</gene>
<reference key="1">
    <citation type="journal article" date="2004" name="Nucleic Acids Res.">
        <title>Whole genome comparisons of serotype 4b and 1/2a strains of the food-borne pathogen Listeria monocytogenes reveal new insights into the core genome components of this species.</title>
        <authorList>
            <person name="Nelson K.E."/>
            <person name="Fouts D.E."/>
            <person name="Mongodin E.F."/>
            <person name="Ravel J."/>
            <person name="DeBoy R.T."/>
            <person name="Kolonay J.F."/>
            <person name="Rasko D.A."/>
            <person name="Angiuoli S.V."/>
            <person name="Gill S.R."/>
            <person name="Paulsen I.T."/>
            <person name="Peterson J.D."/>
            <person name="White O."/>
            <person name="Nelson W.C."/>
            <person name="Nierman W.C."/>
            <person name="Beanan M.J."/>
            <person name="Brinkac L.M."/>
            <person name="Daugherty S.C."/>
            <person name="Dodson R.J."/>
            <person name="Durkin A.S."/>
            <person name="Madupu R."/>
            <person name="Haft D.H."/>
            <person name="Selengut J."/>
            <person name="Van Aken S.E."/>
            <person name="Khouri H.M."/>
            <person name="Fedorova N."/>
            <person name="Forberger H.A."/>
            <person name="Tran B."/>
            <person name="Kathariou S."/>
            <person name="Wonderling L.D."/>
            <person name="Uhlich G.A."/>
            <person name="Bayles D.O."/>
            <person name="Luchansky J.B."/>
            <person name="Fraser C.M."/>
        </authorList>
    </citation>
    <scope>NUCLEOTIDE SEQUENCE [LARGE SCALE GENOMIC DNA]</scope>
    <source>
        <strain>F2365</strain>
    </source>
</reference>
<dbReference type="EC" id="2.6.1.21"/>
<dbReference type="EMBL" id="AE017262">
    <property type="protein sequence ID" value="AAT04415.1"/>
    <property type="molecule type" value="Genomic_DNA"/>
</dbReference>
<dbReference type="RefSeq" id="WP_003727356.1">
    <property type="nucleotide sequence ID" value="NC_002973.6"/>
</dbReference>
<dbReference type="SMR" id="Q71Z49"/>
<dbReference type="KEGG" id="lmf:LMOf2365_1641"/>
<dbReference type="HOGENOM" id="CLU_020844_4_1_9"/>
<dbReference type="GO" id="GO:0005829">
    <property type="term" value="C:cytosol"/>
    <property type="evidence" value="ECO:0007669"/>
    <property type="project" value="TreeGrafter"/>
</dbReference>
<dbReference type="GO" id="GO:0047810">
    <property type="term" value="F:D-alanine-2-oxoglutarate aminotransferase activity"/>
    <property type="evidence" value="ECO:0007669"/>
    <property type="project" value="UniProtKB-EC"/>
</dbReference>
<dbReference type="GO" id="GO:0030170">
    <property type="term" value="F:pyridoxal phosphate binding"/>
    <property type="evidence" value="ECO:0007669"/>
    <property type="project" value="InterPro"/>
</dbReference>
<dbReference type="GO" id="GO:0046394">
    <property type="term" value="P:carboxylic acid biosynthetic process"/>
    <property type="evidence" value="ECO:0007669"/>
    <property type="project" value="UniProtKB-ARBA"/>
</dbReference>
<dbReference type="GO" id="GO:0046416">
    <property type="term" value="P:D-amino acid metabolic process"/>
    <property type="evidence" value="ECO:0007669"/>
    <property type="project" value="InterPro"/>
</dbReference>
<dbReference type="CDD" id="cd01558">
    <property type="entry name" value="D-AAT_like"/>
    <property type="match status" value="1"/>
</dbReference>
<dbReference type="FunFam" id="3.20.10.10:FF:000002">
    <property type="entry name" value="D-alanine aminotransferase"/>
    <property type="match status" value="1"/>
</dbReference>
<dbReference type="FunFam" id="3.30.470.10:FF:000009">
    <property type="entry name" value="D-alanine aminotransferase"/>
    <property type="match status" value="1"/>
</dbReference>
<dbReference type="Gene3D" id="3.30.470.10">
    <property type="match status" value="1"/>
</dbReference>
<dbReference type="Gene3D" id="3.20.10.10">
    <property type="entry name" value="D-amino Acid Aminotransferase, subunit A, domain 2"/>
    <property type="match status" value="1"/>
</dbReference>
<dbReference type="InterPro" id="IPR001544">
    <property type="entry name" value="Aminotrans_IV"/>
</dbReference>
<dbReference type="InterPro" id="IPR036038">
    <property type="entry name" value="Aminotransferase-like"/>
</dbReference>
<dbReference type="InterPro" id="IPR043132">
    <property type="entry name" value="BCAT-like_C"/>
</dbReference>
<dbReference type="InterPro" id="IPR043131">
    <property type="entry name" value="BCAT-like_N"/>
</dbReference>
<dbReference type="InterPro" id="IPR050571">
    <property type="entry name" value="Class-IV_PLP-Dep_Aminotrnsfr"/>
</dbReference>
<dbReference type="InterPro" id="IPR005784">
    <property type="entry name" value="D_amino_transT"/>
</dbReference>
<dbReference type="NCBIfam" id="TIGR01121">
    <property type="entry name" value="D_amino_aminoT"/>
    <property type="match status" value="1"/>
</dbReference>
<dbReference type="PANTHER" id="PTHR42743">
    <property type="entry name" value="AMINO-ACID AMINOTRANSFERASE"/>
    <property type="match status" value="1"/>
</dbReference>
<dbReference type="PANTHER" id="PTHR42743:SF10">
    <property type="entry name" value="D-ALANINE AMINOTRANSFERASE"/>
    <property type="match status" value="1"/>
</dbReference>
<dbReference type="Pfam" id="PF01063">
    <property type="entry name" value="Aminotran_4"/>
    <property type="match status" value="1"/>
</dbReference>
<dbReference type="SUPFAM" id="SSF56752">
    <property type="entry name" value="D-aminoacid aminotransferase-like PLP-dependent enzymes"/>
    <property type="match status" value="1"/>
</dbReference>
<accession>Q71Z49</accession>
<keyword id="KW-0032">Aminotransferase</keyword>
<keyword id="KW-0663">Pyridoxal phosphate</keyword>
<keyword id="KW-0808">Transferase</keyword>
<protein>
    <recommendedName>
        <fullName>D-alanine aminotransferase</fullName>
        <ecNumber>2.6.1.21</ecNumber>
    </recommendedName>
    <alternativeName>
        <fullName>D-amino acid aminotransferase</fullName>
    </alternativeName>
    <alternativeName>
        <fullName>D-amino acid transaminase</fullName>
        <shortName>DAAT</shortName>
    </alternativeName>
    <alternativeName>
        <fullName>D-aspartate aminotransferase</fullName>
    </alternativeName>
</protein>
<organism>
    <name type="scientific">Listeria monocytogenes serotype 4b (strain F2365)</name>
    <dbReference type="NCBI Taxonomy" id="265669"/>
    <lineage>
        <taxon>Bacteria</taxon>
        <taxon>Bacillati</taxon>
        <taxon>Bacillota</taxon>
        <taxon>Bacilli</taxon>
        <taxon>Bacillales</taxon>
        <taxon>Listeriaceae</taxon>
        <taxon>Listeria</taxon>
    </lineage>
</organism>